<accession>A0PZ39</accession>
<name>MNTP_CLONN</name>
<comment type="function">
    <text evidence="1">Probably functions as a manganese efflux pump.</text>
</comment>
<comment type="subcellular location">
    <subcellularLocation>
        <location evidence="1">Cell membrane</location>
        <topology evidence="1">Multi-pass membrane protein</topology>
    </subcellularLocation>
</comment>
<comment type="similarity">
    <text evidence="1">Belongs to the MntP (TC 9.B.29) family.</text>
</comment>
<proteinExistence type="inferred from homology"/>
<evidence type="ECO:0000255" key="1">
    <source>
        <dbReference type="HAMAP-Rule" id="MF_01521"/>
    </source>
</evidence>
<feature type="chain" id="PRO_0000296919" description="Putative manganese efflux pump MntP">
    <location>
        <begin position="1"/>
        <end position="185"/>
    </location>
</feature>
<feature type="transmembrane region" description="Helical" evidence="1">
    <location>
        <begin position="8"/>
        <end position="28"/>
    </location>
</feature>
<feature type="transmembrane region" description="Helical" evidence="1">
    <location>
        <begin position="42"/>
        <end position="62"/>
    </location>
</feature>
<feature type="transmembrane region" description="Helical" evidence="1">
    <location>
        <begin position="66"/>
        <end position="86"/>
    </location>
</feature>
<feature type="transmembrane region" description="Helical" evidence="1">
    <location>
        <begin position="103"/>
        <end position="123"/>
    </location>
</feature>
<feature type="transmembrane region" description="Helical" evidence="1">
    <location>
        <begin position="137"/>
        <end position="157"/>
    </location>
</feature>
<feature type="transmembrane region" description="Helical" evidence="1">
    <location>
        <begin position="165"/>
        <end position="185"/>
    </location>
</feature>
<protein>
    <recommendedName>
        <fullName evidence="1">Putative manganese efflux pump MntP</fullName>
    </recommendedName>
</protein>
<organism>
    <name type="scientific">Clostridium novyi (strain NT)</name>
    <dbReference type="NCBI Taxonomy" id="386415"/>
    <lineage>
        <taxon>Bacteria</taxon>
        <taxon>Bacillati</taxon>
        <taxon>Bacillota</taxon>
        <taxon>Clostridia</taxon>
        <taxon>Eubacteriales</taxon>
        <taxon>Clostridiaceae</taxon>
        <taxon>Clostridium</taxon>
    </lineage>
</organism>
<keyword id="KW-1003">Cell membrane</keyword>
<keyword id="KW-0406">Ion transport</keyword>
<keyword id="KW-0464">Manganese</keyword>
<keyword id="KW-0472">Membrane</keyword>
<keyword id="KW-1185">Reference proteome</keyword>
<keyword id="KW-0812">Transmembrane</keyword>
<keyword id="KW-1133">Transmembrane helix</keyword>
<keyword id="KW-0813">Transport</keyword>
<sequence>MTVSIYSLFVIAVALALDAFGVSLSIGLSKNLRYKNKALFCISFGFFQFMLAYIGSYLGVLFNKYILVIPNIIGGIVIFVVGILMLKDGMKKDNKHMNIHKKMYFILGISVSIDAAIVGFTVLNSITSKLLLLESTIFIGIITSILCLIAFLISGYLKRINTISKYANYIGGVILMLFGLEMIFM</sequence>
<gene>
    <name evidence="1" type="primary">mntP</name>
    <name type="ordered locus">NT01CX_1560</name>
</gene>
<reference key="1">
    <citation type="journal article" date="2006" name="Nat. Biotechnol.">
        <title>The genome and transcriptomes of the anti-tumor agent Clostridium novyi-NT.</title>
        <authorList>
            <person name="Bettegowda C."/>
            <person name="Huang X."/>
            <person name="Lin J."/>
            <person name="Cheong I."/>
            <person name="Kohli M."/>
            <person name="Szabo S.A."/>
            <person name="Zhang X."/>
            <person name="Diaz L.A. Jr."/>
            <person name="Velculescu V.E."/>
            <person name="Parmigiani G."/>
            <person name="Kinzler K.W."/>
            <person name="Vogelstein B."/>
            <person name="Zhou S."/>
        </authorList>
    </citation>
    <scope>NUCLEOTIDE SEQUENCE [LARGE SCALE GENOMIC DNA]</scope>
    <source>
        <strain>NT</strain>
    </source>
</reference>
<dbReference type="EMBL" id="CP000382">
    <property type="protein sequence ID" value="ABK61450.1"/>
    <property type="molecule type" value="Genomic_DNA"/>
</dbReference>
<dbReference type="RefSeq" id="WP_011721649.1">
    <property type="nucleotide sequence ID" value="NC_008593.1"/>
</dbReference>
<dbReference type="STRING" id="386415.NT01CX_1560"/>
<dbReference type="KEGG" id="cno:NT01CX_1560"/>
<dbReference type="PATRIC" id="fig|386415.7.peg.667"/>
<dbReference type="eggNOG" id="COG1971">
    <property type="taxonomic scope" value="Bacteria"/>
</dbReference>
<dbReference type="HOGENOM" id="CLU_096410_3_0_9"/>
<dbReference type="Proteomes" id="UP000008220">
    <property type="component" value="Chromosome"/>
</dbReference>
<dbReference type="GO" id="GO:0005886">
    <property type="term" value="C:plasma membrane"/>
    <property type="evidence" value="ECO:0007669"/>
    <property type="project" value="UniProtKB-SubCell"/>
</dbReference>
<dbReference type="GO" id="GO:0005384">
    <property type="term" value="F:manganese ion transmembrane transporter activity"/>
    <property type="evidence" value="ECO:0007669"/>
    <property type="project" value="UniProtKB-UniRule"/>
</dbReference>
<dbReference type="HAMAP" id="MF_01521">
    <property type="entry name" value="MntP_pump"/>
    <property type="match status" value="1"/>
</dbReference>
<dbReference type="InterPro" id="IPR003810">
    <property type="entry name" value="Mntp/YtaF"/>
</dbReference>
<dbReference type="InterPro" id="IPR022929">
    <property type="entry name" value="Put_MntP"/>
</dbReference>
<dbReference type="PANTHER" id="PTHR35529">
    <property type="entry name" value="MANGANESE EFFLUX PUMP MNTP-RELATED"/>
    <property type="match status" value="1"/>
</dbReference>
<dbReference type="PANTHER" id="PTHR35529:SF1">
    <property type="entry name" value="MANGANESE EFFLUX PUMP MNTP-RELATED"/>
    <property type="match status" value="1"/>
</dbReference>
<dbReference type="Pfam" id="PF02659">
    <property type="entry name" value="Mntp"/>
    <property type="match status" value="1"/>
</dbReference>